<gene>
    <name type="primary">Srp54</name>
</gene>
<accession>Q6AYB5</accession>
<organism>
    <name type="scientific">Rattus norvegicus</name>
    <name type="common">Rat</name>
    <dbReference type="NCBI Taxonomy" id="10116"/>
    <lineage>
        <taxon>Eukaryota</taxon>
        <taxon>Metazoa</taxon>
        <taxon>Chordata</taxon>
        <taxon>Craniata</taxon>
        <taxon>Vertebrata</taxon>
        <taxon>Euteleostomi</taxon>
        <taxon>Mammalia</taxon>
        <taxon>Eutheria</taxon>
        <taxon>Euarchontoglires</taxon>
        <taxon>Glires</taxon>
        <taxon>Rodentia</taxon>
        <taxon>Myomorpha</taxon>
        <taxon>Muroidea</taxon>
        <taxon>Muridae</taxon>
        <taxon>Murinae</taxon>
        <taxon>Rattus</taxon>
    </lineage>
</organism>
<sequence length="504" mass="55705">MVLADLGRKITSALRSLSNATIINEEVLNAMLKEVCTALLEADVNIKLVKQLRENVKSAIDLEEMASGLNKRKMIQHAVFKELVKLVDPGVKAWTPTKGKQNVIMFVGLQGSGKTTTCSKLAYFYQRKGWKTCLICADTFRAGAFDQLKQNATKARIPFYGSYTEMDPVIIASEGVEKFKNENFEIIIVDTSGRHKQEDSLFEEMLQVSNAIQPDNIVYVMDASIGQACEAQAKAFKDKVDVASVIVTKLDGHAKGGGALSAVAATKSPIIFIGTGEHIDDFEPFKTQPFISKLLGMGDIEGLIDKVNELKLDDNEALIEKLKHGQFTLRDMYEQFQNIMKMGPFSQILGMIPGFGTDFMSKGNEQESMARLKKLMTIMDSMNDQELDSTDGAKVFSKQPGRIQRVARGSGVSTRDVQELLTQYTKFAQMVKKMGGIKGLFKGGDMSKNVSQSQMAKLNQQMAKMMDPRVLHHMGGMAGLQSMMRQFQQGAAGNMKGMMGFNNM</sequence>
<proteinExistence type="evidence at transcript level"/>
<reference key="1">
    <citation type="journal article" date="2004" name="Genome Res.">
        <title>The status, quality, and expansion of the NIH full-length cDNA project: the Mammalian Gene Collection (MGC).</title>
        <authorList>
            <consortium name="The MGC Project Team"/>
        </authorList>
    </citation>
    <scope>NUCLEOTIDE SEQUENCE [LARGE SCALE MRNA]</scope>
    <source>
        <tissue>Kidney</tissue>
    </source>
</reference>
<dbReference type="EC" id="3.6.5.4" evidence="3"/>
<dbReference type="EMBL" id="BC079117">
    <property type="protein sequence ID" value="AAH79117.1"/>
    <property type="molecule type" value="mRNA"/>
</dbReference>
<dbReference type="RefSeq" id="NP_446323.1">
    <property type="nucleotide sequence ID" value="NM_053871.1"/>
</dbReference>
<dbReference type="SMR" id="Q6AYB5"/>
<dbReference type="BioGRID" id="250535">
    <property type="interactions" value="1"/>
</dbReference>
<dbReference type="FunCoup" id="Q6AYB5">
    <property type="interactions" value="3327"/>
</dbReference>
<dbReference type="STRING" id="10116.ENSRNOP00000048945"/>
<dbReference type="iPTMnet" id="Q6AYB5"/>
<dbReference type="PhosphoSitePlus" id="Q6AYB5"/>
<dbReference type="jPOST" id="Q6AYB5"/>
<dbReference type="PaxDb" id="10116-ENSRNOP00000048945"/>
<dbReference type="Ensembl" id="ENSRNOT00000052076.5">
    <property type="protein sequence ID" value="ENSRNOP00000048945.3"/>
    <property type="gene ID" value="ENSRNOG00000032776.5"/>
</dbReference>
<dbReference type="GeneID" id="116650"/>
<dbReference type="KEGG" id="rno:116650"/>
<dbReference type="UCSC" id="RGD:621390">
    <property type="organism name" value="rat"/>
</dbReference>
<dbReference type="AGR" id="RGD:621390"/>
<dbReference type="CTD" id="24067"/>
<dbReference type="RGD" id="621390">
    <property type="gene designation" value="Srp54"/>
</dbReference>
<dbReference type="eggNOG" id="KOG0780">
    <property type="taxonomic scope" value="Eukaryota"/>
</dbReference>
<dbReference type="GeneTree" id="ENSGT00550000074824"/>
<dbReference type="HOGENOM" id="CLU_009301_6_1_1"/>
<dbReference type="InParanoid" id="Q6AYB5"/>
<dbReference type="OMA" id="GMTGQDA"/>
<dbReference type="OrthoDB" id="10250817at2759"/>
<dbReference type="PhylomeDB" id="Q6AYB5"/>
<dbReference type="TreeFam" id="TF106249"/>
<dbReference type="Reactome" id="R-RNO-1799339">
    <property type="pathway name" value="SRP-dependent cotranslational protein targeting to membrane"/>
</dbReference>
<dbReference type="PRO" id="PR:Q6AYB5"/>
<dbReference type="Proteomes" id="UP000002494">
    <property type="component" value="Chromosome 6"/>
</dbReference>
<dbReference type="Bgee" id="ENSRNOG00000032776">
    <property type="expression patterns" value="Expressed in pancreas and 19 other cell types or tissues"/>
</dbReference>
<dbReference type="GO" id="GO:0005737">
    <property type="term" value="C:cytoplasm"/>
    <property type="evidence" value="ECO:0000266"/>
    <property type="project" value="RGD"/>
</dbReference>
<dbReference type="GO" id="GO:0005829">
    <property type="term" value="C:cytosol"/>
    <property type="evidence" value="ECO:0000318"/>
    <property type="project" value="GO_Central"/>
</dbReference>
<dbReference type="GO" id="GO:0005783">
    <property type="term" value="C:endoplasmic reticulum"/>
    <property type="evidence" value="ECO:0007669"/>
    <property type="project" value="UniProtKB-SubCell"/>
</dbReference>
<dbReference type="GO" id="GO:0016607">
    <property type="term" value="C:nuclear speck"/>
    <property type="evidence" value="ECO:0007669"/>
    <property type="project" value="UniProtKB-SubCell"/>
</dbReference>
<dbReference type="GO" id="GO:0005634">
    <property type="term" value="C:nucleus"/>
    <property type="evidence" value="ECO:0000266"/>
    <property type="project" value="RGD"/>
</dbReference>
<dbReference type="GO" id="GO:0005786">
    <property type="term" value="C:signal recognition particle, endoplasmic reticulum targeting"/>
    <property type="evidence" value="ECO:0000266"/>
    <property type="project" value="RGD"/>
</dbReference>
<dbReference type="GO" id="GO:0008312">
    <property type="term" value="F:7S RNA binding"/>
    <property type="evidence" value="ECO:0000266"/>
    <property type="project" value="RGD"/>
</dbReference>
<dbReference type="GO" id="GO:0016887">
    <property type="term" value="F:ATP hydrolysis activity"/>
    <property type="evidence" value="ECO:0007669"/>
    <property type="project" value="InterPro"/>
</dbReference>
<dbReference type="GO" id="GO:0030942">
    <property type="term" value="F:endoplasmic reticulum signal peptide binding"/>
    <property type="evidence" value="ECO:0000266"/>
    <property type="project" value="RGD"/>
</dbReference>
<dbReference type="GO" id="GO:0019003">
    <property type="term" value="F:GDP binding"/>
    <property type="evidence" value="ECO:0000266"/>
    <property type="project" value="RGD"/>
</dbReference>
<dbReference type="GO" id="GO:0005525">
    <property type="term" value="F:GTP binding"/>
    <property type="evidence" value="ECO:0000266"/>
    <property type="project" value="RGD"/>
</dbReference>
<dbReference type="GO" id="GO:0003924">
    <property type="term" value="F:GTPase activity"/>
    <property type="evidence" value="ECO:0000250"/>
    <property type="project" value="UniProtKB"/>
</dbReference>
<dbReference type="GO" id="GO:0043021">
    <property type="term" value="F:ribonucleoprotein complex binding"/>
    <property type="evidence" value="ECO:0000266"/>
    <property type="project" value="RGD"/>
</dbReference>
<dbReference type="GO" id="GO:0031017">
    <property type="term" value="P:exocrine pancreas development"/>
    <property type="evidence" value="ECO:0000250"/>
    <property type="project" value="UniProtKB"/>
</dbReference>
<dbReference type="GO" id="GO:0030851">
    <property type="term" value="P:granulocyte differentiation"/>
    <property type="evidence" value="ECO:0000250"/>
    <property type="project" value="UniProtKB"/>
</dbReference>
<dbReference type="GO" id="GO:0030593">
    <property type="term" value="P:neutrophil chemotaxis"/>
    <property type="evidence" value="ECO:0000250"/>
    <property type="project" value="UniProtKB"/>
</dbReference>
<dbReference type="GO" id="GO:0045047">
    <property type="term" value="P:protein targeting to ER"/>
    <property type="evidence" value="ECO:0000266"/>
    <property type="project" value="RGD"/>
</dbReference>
<dbReference type="GO" id="GO:0006617">
    <property type="term" value="P:SRP-dependent cotranslational protein targeting to membrane, signal sequence recognition"/>
    <property type="evidence" value="ECO:0000266"/>
    <property type="project" value="RGD"/>
</dbReference>
<dbReference type="GO" id="GO:0006616">
    <property type="term" value="P:SRP-dependent cotranslational protein targeting to membrane, translocation"/>
    <property type="evidence" value="ECO:0000266"/>
    <property type="project" value="RGD"/>
</dbReference>
<dbReference type="CDD" id="cd17875">
    <property type="entry name" value="SRP54_G"/>
    <property type="match status" value="1"/>
</dbReference>
<dbReference type="FunFam" id="1.10.260.30:FF:000002">
    <property type="entry name" value="Signal recognition particle 54 kDa protein"/>
    <property type="match status" value="1"/>
</dbReference>
<dbReference type="FunFam" id="1.20.120.140:FF:000003">
    <property type="entry name" value="Signal recognition particle 54 kDa protein"/>
    <property type="match status" value="1"/>
</dbReference>
<dbReference type="FunFam" id="3.40.50.300:FF:000022">
    <property type="entry name" value="Signal recognition particle 54 kDa subunit"/>
    <property type="match status" value="1"/>
</dbReference>
<dbReference type="Gene3D" id="3.40.50.300">
    <property type="entry name" value="P-loop containing nucleotide triphosphate hydrolases"/>
    <property type="match status" value="1"/>
</dbReference>
<dbReference type="Gene3D" id="1.20.120.140">
    <property type="entry name" value="Signal recognition particle SRP54, nucleotide-binding domain"/>
    <property type="match status" value="1"/>
</dbReference>
<dbReference type="Gene3D" id="1.10.260.30">
    <property type="entry name" value="Signal recognition particle, SRP54 subunit, M-domain"/>
    <property type="match status" value="1"/>
</dbReference>
<dbReference type="HAMAP" id="MF_00306">
    <property type="entry name" value="SRP54"/>
    <property type="match status" value="1"/>
</dbReference>
<dbReference type="InterPro" id="IPR003593">
    <property type="entry name" value="AAA+_ATPase"/>
</dbReference>
<dbReference type="InterPro" id="IPR027417">
    <property type="entry name" value="P-loop_NTPase"/>
</dbReference>
<dbReference type="InterPro" id="IPR036891">
    <property type="entry name" value="Signal_recog_part_SRP54_M_sf"/>
</dbReference>
<dbReference type="InterPro" id="IPR013822">
    <property type="entry name" value="Signal_recog_particl_SRP54_hlx"/>
</dbReference>
<dbReference type="InterPro" id="IPR004125">
    <property type="entry name" value="Signal_recog_particle_SRP54_M"/>
</dbReference>
<dbReference type="InterPro" id="IPR022941">
    <property type="entry name" value="SRP54"/>
</dbReference>
<dbReference type="InterPro" id="IPR006325">
    <property type="entry name" value="SRP54_euk"/>
</dbReference>
<dbReference type="InterPro" id="IPR000897">
    <property type="entry name" value="SRP54_GTPase_dom"/>
</dbReference>
<dbReference type="InterPro" id="IPR042101">
    <property type="entry name" value="SRP54_N_sf"/>
</dbReference>
<dbReference type="NCBIfam" id="TIGR01425">
    <property type="entry name" value="SRP54_euk"/>
    <property type="match status" value="1"/>
</dbReference>
<dbReference type="PANTHER" id="PTHR11564">
    <property type="entry name" value="SIGNAL RECOGNITION PARTICLE 54K PROTEIN SRP54"/>
    <property type="match status" value="1"/>
</dbReference>
<dbReference type="PANTHER" id="PTHR11564:SF5">
    <property type="entry name" value="SIGNAL RECOGNITION PARTICLE SUBUNIT SRP54"/>
    <property type="match status" value="1"/>
</dbReference>
<dbReference type="Pfam" id="PF00448">
    <property type="entry name" value="SRP54"/>
    <property type="match status" value="1"/>
</dbReference>
<dbReference type="Pfam" id="PF02881">
    <property type="entry name" value="SRP54_N"/>
    <property type="match status" value="1"/>
</dbReference>
<dbReference type="Pfam" id="PF02978">
    <property type="entry name" value="SRP_SPB"/>
    <property type="match status" value="1"/>
</dbReference>
<dbReference type="SMART" id="SM00382">
    <property type="entry name" value="AAA"/>
    <property type="match status" value="1"/>
</dbReference>
<dbReference type="SMART" id="SM00962">
    <property type="entry name" value="SRP54"/>
    <property type="match status" value="1"/>
</dbReference>
<dbReference type="SMART" id="SM00963">
    <property type="entry name" value="SRP54_N"/>
    <property type="match status" value="1"/>
</dbReference>
<dbReference type="SUPFAM" id="SSF52540">
    <property type="entry name" value="P-loop containing nucleoside triphosphate hydrolases"/>
    <property type="match status" value="1"/>
</dbReference>
<dbReference type="SUPFAM" id="SSF47446">
    <property type="entry name" value="Signal peptide-binding domain"/>
    <property type="match status" value="1"/>
</dbReference>
<dbReference type="PROSITE" id="PS00300">
    <property type="entry name" value="SRP54"/>
    <property type="match status" value="1"/>
</dbReference>
<feature type="chain" id="PRO_0000101196" description="Signal recognition particle subunit SRP54">
    <location>
        <begin position="1"/>
        <end position="504"/>
    </location>
</feature>
<feature type="region of interest" description="NG-domain" evidence="3">
    <location>
        <begin position="1"/>
        <end position="295"/>
    </location>
</feature>
<feature type="region of interest" description="M-domain" evidence="3">
    <location>
        <begin position="296"/>
        <end position="504"/>
    </location>
</feature>
<feature type="binding site" evidence="1">
    <location>
        <begin position="108"/>
        <end position="115"/>
    </location>
    <ligand>
        <name>GTP</name>
        <dbReference type="ChEBI" id="CHEBI:37565"/>
    </ligand>
</feature>
<feature type="binding site" evidence="1">
    <location>
        <begin position="190"/>
        <end position="194"/>
    </location>
    <ligand>
        <name>GTP</name>
        <dbReference type="ChEBI" id="CHEBI:37565"/>
    </ligand>
</feature>
<feature type="binding site" evidence="1">
    <location>
        <begin position="248"/>
        <end position="251"/>
    </location>
    <ligand>
        <name>GTP</name>
        <dbReference type="ChEBI" id="CHEBI:37565"/>
    </ligand>
</feature>
<keyword id="KW-0963">Cytoplasm</keyword>
<keyword id="KW-0256">Endoplasmic reticulum</keyword>
<keyword id="KW-0342">GTP-binding</keyword>
<keyword id="KW-0378">Hydrolase</keyword>
<keyword id="KW-0547">Nucleotide-binding</keyword>
<keyword id="KW-0539">Nucleus</keyword>
<keyword id="KW-1185">Reference proteome</keyword>
<keyword id="KW-0687">Ribonucleoprotein</keyword>
<keyword id="KW-0694">RNA-binding</keyword>
<keyword id="KW-0733">Signal recognition particle</keyword>
<comment type="function">
    <text evidence="2 3">Component of the signal recognition particle (SRP) complex, a ribonucleoprotein complex that mediates the cotranslational targeting of secretory and membrane proteins to the endoplasmic reticulum (ER) (By similarity). As part of the SRP complex, associates with the SRP receptor (SR) component SRPRA to target secretory proteins to the endoplasmic reticulum membrane (By similarity). Binds to the signal sequence of presecretory proteins when they emerge from the ribosomes (By similarity). Displays basal GTPase activity, and stimulates reciprocal GTPase activation of the SR subunit SRPRA (By similarity). Forms a guanosine 5'-triphosphate (GTP)-dependent complex with the SR subunit SRPRA (By similarity). SR compaction and GTPase mediated rearrangement of SR drive SRP-mediated cotranslational protein translocation into the ER (By similarity). Requires the presence of SRP9/SRP14 and/or SRP19 to stably interact with RNA (By similarity). Plays a role in proliferation and differentiation of granulocytic cells, neutrophils migration capacity and exocrine pancreas development (By similarity).</text>
</comment>
<comment type="catalytic activity">
    <reaction evidence="3">
        <text>GTP + H2O = GDP + phosphate + H(+)</text>
        <dbReference type="Rhea" id="RHEA:19669"/>
        <dbReference type="ChEBI" id="CHEBI:15377"/>
        <dbReference type="ChEBI" id="CHEBI:15378"/>
        <dbReference type="ChEBI" id="CHEBI:37565"/>
        <dbReference type="ChEBI" id="CHEBI:43474"/>
        <dbReference type="ChEBI" id="CHEBI:58189"/>
        <dbReference type="EC" id="3.6.5.4"/>
    </reaction>
    <physiologicalReaction direction="left-to-right" evidence="3">
        <dbReference type="Rhea" id="RHEA:19670"/>
    </physiologicalReaction>
</comment>
<comment type="subunit">
    <text evidence="3">Component of a signal recognition particle (SRP) complex that consists of a 7SL RNA molecule of 300 nucleotides and six protein subunits: SRP72, SRP68, SRP54, SRP19, SRP14 and SRP9 (By similarity). Interacts with RNPS1 (By similarity). Interacts with the SRP receptor subunit SRPRA (By similarity).</text>
</comment>
<comment type="subcellular location">
    <subcellularLocation>
        <location evidence="3">Nucleus speckle</location>
    </subcellularLocation>
    <subcellularLocation>
        <location evidence="3">Cytoplasm</location>
    </subcellularLocation>
    <subcellularLocation>
        <location evidence="3">Endoplasmic reticulum</location>
    </subcellularLocation>
</comment>
<comment type="domain">
    <text evidence="3">The NG domain, also named G domain, is a special guanosine triphosphatase (GTPase) domain, which binds GTP and forms a guanosine 5'-triphosphate (GTP)-dependent complex with a homologous NG domain in the SRP receptor subunit SRPRA (By similarity). The two NG domains undergo cooperative rearrangements upon their assembly, which culminate in the reciprocal activation of the GTPase activity of one another (By similarity). SRP receptor compaction upon binding with cargo-loaded SRP and GTPase rearrangement drive SRP-mediated cotranslational protein translocation into the ER (By similarity).</text>
</comment>
<comment type="domain">
    <text evidence="3">The M domain binds the 7SL RNA in presence of SRP19 and binds the signal sequence of presecretory proteins.</text>
</comment>
<comment type="similarity">
    <text evidence="4">Belongs to the GTP-binding SRP family. SRP54 subfamily.</text>
</comment>
<evidence type="ECO:0000250" key="1"/>
<evidence type="ECO:0000250" key="2">
    <source>
        <dbReference type="UniProtKB" id="P61010"/>
    </source>
</evidence>
<evidence type="ECO:0000250" key="3">
    <source>
        <dbReference type="UniProtKB" id="P61011"/>
    </source>
</evidence>
<evidence type="ECO:0000305" key="4"/>
<protein>
    <recommendedName>
        <fullName>Signal recognition particle subunit SRP54</fullName>
        <ecNumber evidence="3">3.6.5.4</ecNumber>
    </recommendedName>
    <alternativeName>
        <fullName>Signal recognition particle 54 kDa protein</fullName>
    </alternativeName>
</protein>
<name>SRP54_RAT</name>